<organism>
    <name type="scientific">Arabidopsis thaliana</name>
    <name type="common">Mouse-ear cress</name>
    <dbReference type="NCBI Taxonomy" id="3702"/>
    <lineage>
        <taxon>Eukaryota</taxon>
        <taxon>Viridiplantae</taxon>
        <taxon>Streptophyta</taxon>
        <taxon>Embryophyta</taxon>
        <taxon>Tracheophyta</taxon>
        <taxon>Spermatophyta</taxon>
        <taxon>Magnoliopsida</taxon>
        <taxon>eudicotyledons</taxon>
        <taxon>Gunneridae</taxon>
        <taxon>Pentapetalae</taxon>
        <taxon>rosids</taxon>
        <taxon>malvids</taxon>
        <taxon>Brassicales</taxon>
        <taxon>Brassicaceae</taxon>
        <taxon>Camelineae</taxon>
        <taxon>Arabidopsis</taxon>
    </lineage>
</organism>
<dbReference type="EC" id="2.1.1.-" evidence="4"/>
<dbReference type="EMBL" id="AC008030">
    <property type="status" value="NOT_ANNOTATED_CDS"/>
    <property type="molecule type" value="Genomic_DNA"/>
</dbReference>
<dbReference type="EMBL" id="CP002684">
    <property type="protein sequence ID" value="AEE31129.1"/>
    <property type="molecule type" value="Genomic_DNA"/>
</dbReference>
<dbReference type="EMBL" id="CP002684">
    <property type="protein sequence ID" value="AEE31130.1"/>
    <property type="molecule type" value="Genomic_DNA"/>
</dbReference>
<dbReference type="EMBL" id="AY093204">
    <property type="protein sequence ID" value="AAM13203.1"/>
    <property type="molecule type" value="mRNA"/>
</dbReference>
<dbReference type="EMBL" id="BT008461">
    <property type="protein sequence ID" value="AAP37820.1"/>
    <property type="molecule type" value="mRNA"/>
</dbReference>
<dbReference type="RefSeq" id="NP_001117383.1">
    <property type="nucleotide sequence ID" value="NM_001123911.4"/>
</dbReference>
<dbReference type="RefSeq" id="NP_174272.2">
    <property type="nucleotide sequence ID" value="NM_102719.7"/>
</dbReference>
<dbReference type="FunCoup" id="Q8RWB7">
    <property type="interactions" value="1414"/>
</dbReference>
<dbReference type="GlyCosmos" id="Q8RWB7">
    <property type="glycosylation" value="1 site, No reported glycans"/>
</dbReference>
<dbReference type="GlyGen" id="Q8RWB7">
    <property type="glycosylation" value="1 site"/>
</dbReference>
<dbReference type="PaxDb" id="3702-AT1G29790.1"/>
<dbReference type="ProteomicsDB" id="187582"/>
<dbReference type="EnsemblPlants" id="AT1G29790.1">
    <property type="protein sequence ID" value="AT1G29790.1"/>
    <property type="gene ID" value="AT1G29790"/>
</dbReference>
<dbReference type="EnsemblPlants" id="AT1G29790.2">
    <property type="protein sequence ID" value="AT1G29790.2"/>
    <property type="gene ID" value="AT1G29790"/>
</dbReference>
<dbReference type="GeneID" id="839857"/>
<dbReference type="Gramene" id="AT1G29790.1">
    <property type="protein sequence ID" value="AT1G29790.1"/>
    <property type="gene ID" value="AT1G29790"/>
</dbReference>
<dbReference type="Gramene" id="AT1G29790.2">
    <property type="protein sequence ID" value="AT1G29790.2"/>
    <property type="gene ID" value="AT1G29790"/>
</dbReference>
<dbReference type="KEGG" id="ath:AT1G29790"/>
<dbReference type="Araport" id="AT1G29790"/>
<dbReference type="TAIR" id="AT1G29790"/>
<dbReference type="eggNOG" id="ENOG502QVGT">
    <property type="taxonomic scope" value="Eukaryota"/>
</dbReference>
<dbReference type="HOGENOM" id="CLU_025910_0_1_1"/>
<dbReference type="InParanoid" id="Q8RWB7"/>
<dbReference type="OMA" id="RWPPGAK"/>
<dbReference type="PhylomeDB" id="Q8RWB7"/>
<dbReference type="PRO" id="PR:Q8RWB7"/>
<dbReference type="Proteomes" id="UP000006548">
    <property type="component" value="Chromosome 1"/>
</dbReference>
<dbReference type="ExpressionAtlas" id="Q8RWB7">
    <property type="expression patterns" value="baseline and differential"/>
</dbReference>
<dbReference type="GO" id="GO:0005768">
    <property type="term" value="C:endosome"/>
    <property type="evidence" value="ECO:0007005"/>
    <property type="project" value="TAIR"/>
</dbReference>
<dbReference type="GO" id="GO:0005794">
    <property type="term" value="C:Golgi apparatus"/>
    <property type="evidence" value="ECO:0007005"/>
    <property type="project" value="TAIR"/>
</dbReference>
<dbReference type="GO" id="GO:0005797">
    <property type="term" value="C:Golgi medial cisterna"/>
    <property type="evidence" value="ECO:0007005"/>
    <property type="project" value="TAIR"/>
</dbReference>
<dbReference type="GO" id="GO:0000139">
    <property type="term" value="C:Golgi membrane"/>
    <property type="evidence" value="ECO:0007669"/>
    <property type="project" value="UniProtKB-SubCell"/>
</dbReference>
<dbReference type="GO" id="GO:0005886">
    <property type="term" value="C:plasma membrane"/>
    <property type="evidence" value="ECO:0007005"/>
    <property type="project" value="TAIR"/>
</dbReference>
<dbReference type="GO" id="GO:0005802">
    <property type="term" value="C:trans-Golgi network"/>
    <property type="evidence" value="ECO:0007005"/>
    <property type="project" value="TAIR"/>
</dbReference>
<dbReference type="GO" id="GO:0008168">
    <property type="term" value="F:methyltransferase activity"/>
    <property type="evidence" value="ECO:0007669"/>
    <property type="project" value="UniProtKB-KW"/>
</dbReference>
<dbReference type="GO" id="GO:0032259">
    <property type="term" value="P:methylation"/>
    <property type="evidence" value="ECO:0007669"/>
    <property type="project" value="UniProtKB-KW"/>
</dbReference>
<dbReference type="InterPro" id="IPR053223">
    <property type="entry name" value="Prob_Methyltransferase"/>
</dbReference>
<dbReference type="InterPro" id="IPR004159">
    <property type="entry name" value="Put_SAM_MeTrfase"/>
</dbReference>
<dbReference type="InterPro" id="IPR029063">
    <property type="entry name" value="SAM-dependent_MTases_sf"/>
</dbReference>
<dbReference type="PANTHER" id="PTHR44067:SF5">
    <property type="entry name" value="EXPRESSED PROTEIN"/>
    <property type="match status" value="1"/>
</dbReference>
<dbReference type="PANTHER" id="PTHR44067">
    <property type="entry name" value="S-ADENOSYL-L-METHIONINE-DEPENDENT METHYLTRANSFERASE SUPERFAMILY PROTEIN-RELATED"/>
    <property type="match status" value="1"/>
</dbReference>
<dbReference type="Pfam" id="PF03141">
    <property type="entry name" value="Methyltransf_29"/>
    <property type="match status" value="1"/>
</dbReference>
<dbReference type="SUPFAM" id="SSF53335">
    <property type="entry name" value="S-adenosyl-L-methionine-dependent methyltransferases"/>
    <property type="match status" value="1"/>
</dbReference>
<keyword id="KW-0325">Glycoprotein</keyword>
<keyword id="KW-0333">Golgi apparatus</keyword>
<keyword id="KW-0472">Membrane</keyword>
<keyword id="KW-0489">Methyltransferase</keyword>
<keyword id="KW-1185">Reference proteome</keyword>
<keyword id="KW-0735">Signal-anchor</keyword>
<keyword id="KW-0808">Transferase</keyword>
<keyword id="KW-0812">Transmembrane</keyword>
<keyword id="KW-1133">Transmembrane helix</keyword>
<gene>
    <name evidence="6" type="primary">CLSC5</name>
    <name evidence="5" type="ordered locus">At1g29790</name>
    <name evidence="6" type="ORF">F1N18.26</name>
</gene>
<evidence type="ECO:0000255" key="1"/>
<evidence type="ECO:0000255" key="2">
    <source>
        <dbReference type="PROSITE-ProRule" id="PRU00498"/>
    </source>
</evidence>
<evidence type="ECO:0000256" key="3">
    <source>
        <dbReference type="SAM" id="MobiDB-lite"/>
    </source>
</evidence>
<evidence type="ECO:0000305" key="4"/>
<evidence type="ECO:0000312" key="5">
    <source>
        <dbReference type="Araport" id="AT1G29790"/>
    </source>
</evidence>
<evidence type="ECO:0000312" key="6">
    <source>
        <dbReference type="EMBL" id="AEE31129.1"/>
    </source>
</evidence>
<name>PMT12_ARATH</name>
<reference key="1">
    <citation type="journal article" date="2000" name="Nature">
        <title>Sequence and analysis of chromosome 1 of the plant Arabidopsis thaliana.</title>
        <authorList>
            <person name="Theologis A."/>
            <person name="Ecker J.R."/>
            <person name="Palm C.J."/>
            <person name="Federspiel N.A."/>
            <person name="Kaul S."/>
            <person name="White O."/>
            <person name="Alonso J."/>
            <person name="Altafi H."/>
            <person name="Araujo R."/>
            <person name="Bowman C.L."/>
            <person name="Brooks S.Y."/>
            <person name="Buehler E."/>
            <person name="Chan A."/>
            <person name="Chao Q."/>
            <person name="Chen H."/>
            <person name="Cheuk R.F."/>
            <person name="Chin C.W."/>
            <person name="Chung M.K."/>
            <person name="Conn L."/>
            <person name="Conway A.B."/>
            <person name="Conway A.R."/>
            <person name="Creasy T.H."/>
            <person name="Dewar K."/>
            <person name="Dunn P."/>
            <person name="Etgu P."/>
            <person name="Feldblyum T.V."/>
            <person name="Feng J.-D."/>
            <person name="Fong B."/>
            <person name="Fujii C.Y."/>
            <person name="Gill J.E."/>
            <person name="Goldsmith A.D."/>
            <person name="Haas B."/>
            <person name="Hansen N.F."/>
            <person name="Hughes B."/>
            <person name="Huizar L."/>
            <person name="Hunter J.L."/>
            <person name="Jenkins J."/>
            <person name="Johnson-Hopson C."/>
            <person name="Khan S."/>
            <person name="Khaykin E."/>
            <person name="Kim C.J."/>
            <person name="Koo H.L."/>
            <person name="Kremenetskaia I."/>
            <person name="Kurtz D.B."/>
            <person name="Kwan A."/>
            <person name="Lam B."/>
            <person name="Langin-Hooper S."/>
            <person name="Lee A."/>
            <person name="Lee J.M."/>
            <person name="Lenz C.A."/>
            <person name="Li J.H."/>
            <person name="Li Y.-P."/>
            <person name="Lin X."/>
            <person name="Liu S.X."/>
            <person name="Liu Z.A."/>
            <person name="Luros J.S."/>
            <person name="Maiti R."/>
            <person name="Marziali A."/>
            <person name="Militscher J."/>
            <person name="Miranda M."/>
            <person name="Nguyen M."/>
            <person name="Nierman W.C."/>
            <person name="Osborne B.I."/>
            <person name="Pai G."/>
            <person name="Peterson J."/>
            <person name="Pham P.K."/>
            <person name="Rizzo M."/>
            <person name="Rooney T."/>
            <person name="Rowley D."/>
            <person name="Sakano H."/>
            <person name="Salzberg S.L."/>
            <person name="Schwartz J.R."/>
            <person name="Shinn P."/>
            <person name="Southwick A.M."/>
            <person name="Sun H."/>
            <person name="Tallon L.J."/>
            <person name="Tambunga G."/>
            <person name="Toriumi M.J."/>
            <person name="Town C.D."/>
            <person name="Utterback T."/>
            <person name="Van Aken S."/>
            <person name="Vaysberg M."/>
            <person name="Vysotskaia V.S."/>
            <person name="Walker M."/>
            <person name="Wu D."/>
            <person name="Yu G."/>
            <person name="Fraser C.M."/>
            <person name="Venter J.C."/>
            <person name="Davis R.W."/>
        </authorList>
    </citation>
    <scope>NUCLEOTIDE SEQUENCE [LARGE SCALE GENOMIC DNA]</scope>
    <source>
        <strain>cv. Columbia</strain>
    </source>
</reference>
<reference key="2">
    <citation type="journal article" date="2017" name="Plant J.">
        <title>Araport11: a complete reannotation of the Arabidopsis thaliana reference genome.</title>
        <authorList>
            <person name="Cheng C.Y."/>
            <person name="Krishnakumar V."/>
            <person name="Chan A.P."/>
            <person name="Thibaud-Nissen F."/>
            <person name="Schobel S."/>
            <person name="Town C.D."/>
        </authorList>
    </citation>
    <scope>GENOME REANNOTATION</scope>
    <source>
        <strain>cv. Columbia</strain>
    </source>
</reference>
<reference key="3">
    <citation type="journal article" date="2003" name="Science">
        <title>Empirical analysis of transcriptional activity in the Arabidopsis genome.</title>
        <authorList>
            <person name="Yamada K."/>
            <person name="Lim J."/>
            <person name="Dale J.M."/>
            <person name="Chen H."/>
            <person name="Shinn P."/>
            <person name="Palm C.J."/>
            <person name="Southwick A.M."/>
            <person name="Wu H.C."/>
            <person name="Kim C.J."/>
            <person name="Nguyen M."/>
            <person name="Pham P.K."/>
            <person name="Cheuk R.F."/>
            <person name="Karlin-Newmann G."/>
            <person name="Liu S.X."/>
            <person name="Lam B."/>
            <person name="Sakano H."/>
            <person name="Wu T."/>
            <person name="Yu G."/>
            <person name="Miranda M."/>
            <person name="Quach H.L."/>
            <person name="Tripp M."/>
            <person name="Chang C.H."/>
            <person name="Lee J.M."/>
            <person name="Toriumi M.J."/>
            <person name="Chan M.M."/>
            <person name="Tang C.C."/>
            <person name="Onodera C.S."/>
            <person name="Deng J.M."/>
            <person name="Akiyama K."/>
            <person name="Ansari Y."/>
            <person name="Arakawa T."/>
            <person name="Banh J."/>
            <person name="Banno F."/>
            <person name="Bowser L."/>
            <person name="Brooks S.Y."/>
            <person name="Carninci P."/>
            <person name="Chao Q."/>
            <person name="Choy N."/>
            <person name="Enju A."/>
            <person name="Goldsmith A.D."/>
            <person name="Gurjal M."/>
            <person name="Hansen N.F."/>
            <person name="Hayashizaki Y."/>
            <person name="Johnson-Hopson C."/>
            <person name="Hsuan V.W."/>
            <person name="Iida K."/>
            <person name="Karnes M."/>
            <person name="Khan S."/>
            <person name="Koesema E."/>
            <person name="Ishida J."/>
            <person name="Jiang P.X."/>
            <person name="Jones T."/>
            <person name="Kawai J."/>
            <person name="Kamiya A."/>
            <person name="Meyers C."/>
            <person name="Nakajima M."/>
            <person name="Narusaka M."/>
            <person name="Seki M."/>
            <person name="Sakurai T."/>
            <person name="Satou M."/>
            <person name="Tamse R."/>
            <person name="Vaysberg M."/>
            <person name="Wallender E.K."/>
            <person name="Wong C."/>
            <person name="Yamamura Y."/>
            <person name="Yuan S."/>
            <person name="Shinozaki K."/>
            <person name="Davis R.W."/>
            <person name="Theologis A."/>
            <person name="Ecker J.R."/>
        </authorList>
    </citation>
    <scope>NUCLEOTIDE SEQUENCE [LARGE SCALE MRNA]</scope>
    <source>
        <strain>cv. Columbia</strain>
    </source>
</reference>
<proteinExistence type="evidence at transcript level"/>
<feature type="chain" id="PRO_5014312305" description="Probable methyltransferase At1g29790">
    <location>
        <begin position="1"/>
        <end position="378"/>
    </location>
</feature>
<feature type="topological domain" description="Cytoplasmic" evidence="4">
    <location>
        <begin position="1"/>
        <end position="6"/>
    </location>
</feature>
<feature type="transmembrane region" description="Helical; Signal-anchor for type II membrane protein" evidence="1">
    <location>
        <begin position="7"/>
        <end position="29"/>
    </location>
</feature>
<feature type="topological domain" description="Lumenal" evidence="4">
    <location>
        <begin position="30"/>
        <end position="378"/>
    </location>
</feature>
<feature type="region of interest" description="Disordered" evidence="3">
    <location>
        <begin position="67"/>
        <end position="87"/>
    </location>
</feature>
<feature type="compositionally biased region" description="Low complexity" evidence="3">
    <location>
        <begin position="74"/>
        <end position="87"/>
    </location>
</feature>
<feature type="glycosylation site" description="N-linked (GlcNAc...) asparagine" evidence="2">
    <location>
        <position position="247"/>
    </location>
</feature>
<protein>
    <recommendedName>
        <fullName evidence="4">Probable methyltransferase At1g29790</fullName>
        <ecNumber evidence="4">2.1.1.-</ecNumber>
    </recommendedName>
</protein>
<accession>Q8RWB7</accession>
<sequence>MAGFTMSLNLLLLVAMVATNILSLYHLSSTTNFFQSTVKSSQSSVPTVPDHLLRQLHTIRAAINHLTTHQPDKSTSTSTSRAAVSSSSSSTAPKELLIYSKLSPIASACHNYPDLLHEYMNYTPFSLCPSDTDLVEKLILRGCHPLPRRRCFSRTPRNPSDSKPESNVLWSYYSCKSFDCLITKFSDLGFDLSLEKSKSQFSAYKSELDLPISQLLQIAKSANSVLRLGIDVGGGTGSFAAAMKARNVTVLTTTMNFNAPYSEAVAMRGLVPLHVPLQQRLPVFDGVVDLVRCGRAVNRWIPVTVMEFFFFDLDRILRGGGYLWLDRFFSKKVDLENVYAPMIGKLGYKKVKWAVANKADSKHGEVFLTALLQKPVAR</sequence>
<comment type="subcellular location">
    <subcellularLocation>
        <location evidence="4">Golgi apparatus membrane</location>
        <topology evidence="4">Single-pass type II membrane protein</topology>
    </subcellularLocation>
</comment>
<comment type="similarity">
    <text evidence="4">Belongs to the methyltransferase superfamily.</text>
</comment>